<evidence type="ECO:0000255" key="1">
    <source>
        <dbReference type="HAMAP-Rule" id="MF_00735"/>
    </source>
</evidence>
<dbReference type="EC" id="2.1.1.-" evidence="1"/>
<dbReference type="EMBL" id="CP000627">
    <property type="protein sequence ID" value="ABQ22081.1"/>
    <property type="molecule type" value="Genomic_DNA"/>
</dbReference>
<dbReference type="EMBL" id="CP001235">
    <property type="protein sequence ID" value="ACP08362.1"/>
    <property type="molecule type" value="Genomic_DNA"/>
</dbReference>
<dbReference type="RefSeq" id="WP_001145807.1">
    <property type="nucleotide sequence ID" value="NZ_JAACZH010000020.1"/>
</dbReference>
<dbReference type="SMR" id="A5F3S3"/>
<dbReference type="KEGG" id="vco:VC0395_A2687"/>
<dbReference type="KEGG" id="vcr:VC395_0337"/>
<dbReference type="PATRIC" id="fig|345073.21.peg.325"/>
<dbReference type="eggNOG" id="COG2264">
    <property type="taxonomic scope" value="Bacteria"/>
</dbReference>
<dbReference type="HOGENOM" id="CLU_049382_4_1_6"/>
<dbReference type="OrthoDB" id="9785995at2"/>
<dbReference type="Proteomes" id="UP000000249">
    <property type="component" value="Chromosome 2"/>
</dbReference>
<dbReference type="GO" id="GO:0005829">
    <property type="term" value="C:cytosol"/>
    <property type="evidence" value="ECO:0007669"/>
    <property type="project" value="TreeGrafter"/>
</dbReference>
<dbReference type="GO" id="GO:0016279">
    <property type="term" value="F:protein-lysine N-methyltransferase activity"/>
    <property type="evidence" value="ECO:0007669"/>
    <property type="project" value="TreeGrafter"/>
</dbReference>
<dbReference type="GO" id="GO:0032259">
    <property type="term" value="P:methylation"/>
    <property type="evidence" value="ECO:0007669"/>
    <property type="project" value="UniProtKB-KW"/>
</dbReference>
<dbReference type="CDD" id="cd02440">
    <property type="entry name" value="AdoMet_MTases"/>
    <property type="match status" value="1"/>
</dbReference>
<dbReference type="Gene3D" id="3.40.50.150">
    <property type="entry name" value="Vaccinia Virus protein VP39"/>
    <property type="match status" value="1"/>
</dbReference>
<dbReference type="HAMAP" id="MF_00735">
    <property type="entry name" value="Methyltr_PrmA"/>
    <property type="match status" value="1"/>
</dbReference>
<dbReference type="InterPro" id="IPR050078">
    <property type="entry name" value="Ribosomal_L11_MeTrfase_PrmA"/>
</dbReference>
<dbReference type="InterPro" id="IPR004498">
    <property type="entry name" value="Ribosomal_PrmA_MeTrfase"/>
</dbReference>
<dbReference type="InterPro" id="IPR029063">
    <property type="entry name" value="SAM-dependent_MTases_sf"/>
</dbReference>
<dbReference type="NCBIfam" id="TIGR00406">
    <property type="entry name" value="prmA"/>
    <property type="match status" value="1"/>
</dbReference>
<dbReference type="PANTHER" id="PTHR43648">
    <property type="entry name" value="ELECTRON TRANSFER FLAVOPROTEIN BETA SUBUNIT LYSINE METHYLTRANSFERASE"/>
    <property type="match status" value="1"/>
</dbReference>
<dbReference type="PANTHER" id="PTHR43648:SF1">
    <property type="entry name" value="ELECTRON TRANSFER FLAVOPROTEIN BETA SUBUNIT LYSINE METHYLTRANSFERASE"/>
    <property type="match status" value="1"/>
</dbReference>
<dbReference type="Pfam" id="PF06325">
    <property type="entry name" value="PrmA"/>
    <property type="match status" value="1"/>
</dbReference>
<dbReference type="PIRSF" id="PIRSF000401">
    <property type="entry name" value="RPL11_MTase"/>
    <property type="match status" value="1"/>
</dbReference>
<dbReference type="SUPFAM" id="SSF53335">
    <property type="entry name" value="S-adenosyl-L-methionine-dependent methyltransferases"/>
    <property type="match status" value="1"/>
</dbReference>
<proteinExistence type="inferred from homology"/>
<feature type="chain" id="PRO_1000072796" description="Ribosomal protein L11 methyltransferase">
    <location>
        <begin position="1"/>
        <end position="295"/>
    </location>
</feature>
<feature type="binding site" evidence="1">
    <location>
        <position position="146"/>
    </location>
    <ligand>
        <name>S-adenosyl-L-methionine</name>
        <dbReference type="ChEBI" id="CHEBI:59789"/>
    </ligand>
</feature>
<feature type="binding site" evidence="1">
    <location>
        <position position="167"/>
    </location>
    <ligand>
        <name>S-adenosyl-L-methionine</name>
        <dbReference type="ChEBI" id="CHEBI:59789"/>
    </ligand>
</feature>
<feature type="binding site" evidence="1">
    <location>
        <position position="189"/>
    </location>
    <ligand>
        <name>S-adenosyl-L-methionine</name>
        <dbReference type="ChEBI" id="CHEBI:59789"/>
    </ligand>
</feature>
<feature type="binding site" evidence="1">
    <location>
        <position position="231"/>
    </location>
    <ligand>
        <name>S-adenosyl-L-methionine</name>
        <dbReference type="ChEBI" id="CHEBI:59789"/>
    </ligand>
</feature>
<sequence length="295" mass="32243">MPWIQIKLNATNDNAEAIGDMLMEETGAVSVTFLDAKDTPVFEPLPGETRLWGDTDVVALYEADMDTSLILQQIKASNMLAEGFAHKVEQVEDKDWEREWMDNFHPMQFGRRLWICPSWREVPDPQAVNVMLDPGLAFGTGTHPTTALCLEWLDNLDLTGKTVIDFGCGSGILAIAAIKLGAAKVIGIDIDPQALLASKDNAARNGVEDQIEVYLPKDQPEGLVADVVVANILAGPLRELSPTIKGLLKPGGQLAMSGILDTQAESVAEFYRDDLELDPIAEKSEWCRISGRKLG</sequence>
<comment type="function">
    <text evidence="1">Methylates ribosomal protein L11.</text>
</comment>
<comment type="catalytic activity">
    <reaction evidence="1">
        <text>L-lysyl-[protein] + 3 S-adenosyl-L-methionine = N(6),N(6),N(6)-trimethyl-L-lysyl-[protein] + 3 S-adenosyl-L-homocysteine + 3 H(+)</text>
        <dbReference type="Rhea" id="RHEA:54192"/>
        <dbReference type="Rhea" id="RHEA-COMP:9752"/>
        <dbReference type="Rhea" id="RHEA-COMP:13826"/>
        <dbReference type="ChEBI" id="CHEBI:15378"/>
        <dbReference type="ChEBI" id="CHEBI:29969"/>
        <dbReference type="ChEBI" id="CHEBI:57856"/>
        <dbReference type="ChEBI" id="CHEBI:59789"/>
        <dbReference type="ChEBI" id="CHEBI:61961"/>
    </reaction>
</comment>
<comment type="subcellular location">
    <subcellularLocation>
        <location evidence="1">Cytoplasm</location>
    </subcellularLocation>
</comment>
<comment type="similarity">
    <text evidence="1">Belongs to the methyltransferase superfamily. PrmA family.</text>
</comment>
<gene>
    <name evidence="1" type="primary">prmA</name>
    <name type="ordered locus">VC0395_A2687</name>
    <name type="ordered locus">VC395_0337</name>
</gene>
<keyword id="KW-0963">Cytoplasm</keyword>
<keyword id="KW-0489">Methyltransferase</keyword>
<keyword id="KW-0949">S-adenosyl-L-methionine</keyword>
<keyword id="KW-0808">Transferase</keyword>
<accession>A5F3S3</accession>
<accession>C3M3V4</accession>
<reference key="1">
    <citation type="submission" date="2007-03" db="EMBL/GenBank/DDBJ databases">
        <authorList>
            <person name="Heidelberg J."/>
        </authorList>
    </citation>
    <scope>NUCLEOTIDE SEQUENCE [LARGE SCALE GENOMIC DNA]</scope>
    <source>
        <strain>ATCC 39541 / Classical Ogawa 395 / O395</strain>
    </source>
</reference>
<reference key="2">
    <citation type="journal article" date="2008" name="PLoS ONE">
        <title>A recalibrated molecular clock and independent origins for the cholera pandemic clones.</title>
        <authorList>
            <person name="Feng L."/>
            <person name="Reeves P.R."/>
            <person name="Lan R."/>
            <person name="Ren Y."/>
            <person name="Gao C."/>
            <person name="Zhou Z."/>
            <person name="Ren Y."/>
            <person name="Cheng J."/>
            <person name="Wang W."/>
            <person name="Wang J."/>
            <person name="Qian W."/>
            <person name="Li D."/>
            <person name="Wang L."/>
        </authorList>
    </citation>
    <scope>NUCLEOTIDE SEQUENCE [LARGE SCALE GENOMIC DNA]</scope>
    <source>
        <strain>ATCC 39541 / Classical Ogawa 395 / O395</strain>
    </source>
</reference>
<protein>
    <recommendedName>
        <fullName evidence="1">Ribosomal protein L11 methyltransferase</fullName>
        <shortName evidence="1">L11 Mtase</shortName>
        <ecNumber evidence="1">2.1.1.-</ecNumber>
    </recommendedName>
</protein>
<organism>
    <name type="scientific">Vibrio cholerae serotype O1 (strain ATCC 39541 / Classical Ogawa 395 / O395)</name>
    <dbReference type="NCBI Taxonomy" id="345073"/>
    <lineage>
        <taxon>Bacteria</taxon>
        <taxon>Pseudomonadati</taxon>
        <taxon>Pseudomonadota</taxon>
        <taxon>Gammaproteobacteria</taxon>
        <taxon>Vibrionales</taxon>
        <taxon>Vibrionaceae</taxon>
        <taxon>Vibrio</taxon>
    </lineage>
</organism>
<name>PRMA_VIBC3</name>